<keyword id="KW-0028">Amino-acid biosynthesis</keyword>
<keyword id="KW-0057">Aromatic amino acid biosynthesis</keyword>
<keyword id="KW-0150">Chloroplast</keyword>
<keyword id="KW-0456">Lyase</keyword>
<keyword id="KW-0584">Phenylalanine biosynthesis</keyword>
<keyword id="KW-0934">Plastid</keyword>
<keyword id="KW-0809">Transit peptide</keyword>
<gene>
    <name evidence="8" type="primary">ADT1</name>
</gene>
<comment type="function">
    <text evidence="4">Converts L-arogenate produced from the shikimate-chorismate pathway into phenylalanine (Phe) (PubMed:20215586). Involved in floral volatile benzenoids and phenylpropanoids (FVBP) production (PubMed:20215586).</text>
</comment>
<comment type="catalytic activity">
    <reaction evidence="4">
        <text>L-arogenate + H(+) = L-phenylalanine + CO2 + H2O</text>
        <dbReference type="Rhea" id="RHEA:12536"/>
        <dbReference type="ChEBI" id="CHEBI:15377"/>
        <dbReference type="ChEBI" id="CHEBI:15378"/>
        <dbReference type="ChEBI" id="CHEBI:16526"/>
        <dbReference type="ChEBI" id="CHEBI:58095"/>
        <dbReference type="ChEBI" id="CHEBI:58180"/>
        <dbReference type="EC" id="4.2.1.91"/>
    </reaction>
    <physiologicalReaction direction="left-to-right" evidence="4">
        <dbReference type="Rhea" id="RHEA:12537"/>
    </physiologicalReaction>
</comment>
<comment type="biophysicochemical properties">
    <kinetics>
        <KM evidence="4">179 uM for L-arogenate</KM>
        <Vmax evidence="4">6.234 pmol/sec/mg enzyme with L-arogenate as substrate</Vmax>
        <text evidence="4">kcat is 0.267 sec(-1) with L-arogenate as substrate.</text>
    </kinetics>
</comment>
<comment type="pathway">
    <text evidence="4">Amino-acid biosynthesis; L-phenylalanine biosynthesis; L-phenylalanine from L-arogenate: step 1/1.</text>
</comment>
<comment type="subcellular location">
    <subcellularLocation>
        <location evidence="4">Plastid</location>
        <location evidence="4">Chloroplast stroma</location>
    </subcellularLocation>
</comment>
<comment type="tissue specificity">
    <text evidence="4 5">Mostly expressed in flowers, especially in petals (corollas and tubes), and, at low levels, in roots, stems, leaves, pistils, stamens, ovaries and sepals.</text>
</comment>
<comment type="developmental stage">
    <text evidence="4 5">Expressed throughout flower development (PubMed:20215586). In corollas, accumulates progressively during flower development, from buds to anthesis (PubMed:20215586, PubMed:20543029).</text>
</comment>
<comment type="induction">
    <text evidence="6 7">Circadian-regulation with peak levels occurring at the end of the light period in flowers (PubMed:26124104). Triggered by EOBI in flowers (PubMed:23275577).</text>
</comment>
<comment type="disruption phenotype">
    <text evidence="4">Reduced arogenate dehydratase activity leading to lower levels of phenylalanine (Phe) and downstream phenylpropanoid/benzenoid volatiles (PubMed:20215586). Petals accumulate unaltered arogenate levels but decreased shikimate and tryptophan (Trp) levels associated with the down-regulation of carbon flux toward shikimic acid (PubMed:20215586).</text>
</comment>
<comment type="miscellaneous">
    <text evidence="4">Has no detectable prehenate dehydratase activity.</text>
</comment>
<protein>
    <recommendedName>
        <fullName evidence="8">Arogenate dehydratase 1</fullName>
        <shortName evidence="8">PhADT1</shortName>
        <ecNumber evidence="4">4.2.1.91</ecNumber>
    </recommendedName>
</protein>
<organism>
    <name type="scientific">Petunia hybrida</name>
    <name type="common">Petunia</name>
    <dbReference type="NCBI Taxonomy" id="4102"/>
    <lineage>
        <taxon>Eukaryota</taxon>
        <taxon>Viridiplantae</taxon>
        <taxon>Streptophyta</taxon>
        <taxon>Embryophyta</taxon>
        <taxon>Tracheophyta</taxon>
        <taxon>Spermatophyta</taxon>
        <taxon>Magnoliopsida</taxon>
        <taxon>eudicotyledons</taxon>
        <taxon>Gunneridae</taxon>
        <taxon>Pentapetalae</taxon>
        <taxon>asterids</taxon>
        <taxon>lamiids</taxon>
        <taxon>Solanales</taxon>
        <taxon>Solanaceae</taxon>
        <taxon>Petunioideae</taxon>
        <taxon>Petunia</taxon>
    </lineage>
</organism>
<reference key="1">
    <citation type="journal article" date="2010" name="Plant Cell">
        <title>RNAi suppression of Arogenate Dehydratase1 reveals that phenylalanine is synthesized predominantly via the arogenate pathway in petunia petals.</title>
        <authorList>
            <person name="Maeda H."/>
            <person name="Shasany A.K."/>
            <person name="Schnepp J."/>
            <person name="Orlova I."/>
            <person name="Taguchi G."/>
            <person name="Cooper B.R."/>
            <person name="Rhodes D."/>
            <person name="Pichersky E."/>
            <person name="Dudareva N."/>
        </authorList>
    </citation>
    <scope>NUCLEOTIDE SEQUENCE [MRNA]</scope>
    <scope>FUNCTION</scope>
    <scope>DISRUPTION PHENOTYPE</scope>
    <scope>CATALYTIC ACTIVITY</scope>
    <scope>PATHWAY</scope>
    <scope>BIOPHYSICOCHEMICAL PROPERTIES</scope>
    <scope>TISSUE SPECIFICITY</scope>
    <scope>DEVELOPMENTAL STAGE</scope>
    <scope>SUBCELLULAR LOCATION</scope>
    <scope>GENE FAMILY</scope>
    <scope>NOMENCLATURE</scope>
</reference>
<reference key="2">
    <citation type="journal article" date="2010" name="Plant Cell">
        <title>EOBII, a gene encoding a flower-specific regulator of phenylpropanoid volatiles' biosynthesis in petunia.</title>
        <authorList>
            <person name="Spitzer-Rimon B."/>
            <person name="Marhevka E."/>
            <person name="Barkai O."/>
            <person name="Marton I."/>
            <person name="Edelbaum O."/>
            <person name="Masci T."/>
            <person name="Prathapani N.K."/>
            <person name="Shklarman E."/>
            <person name="Ovadis M."/>
            <person name="Vainstein A."/>
        </authorList>
    </citation>
    <scope>DEVELOPMENTAL STAGE</scope>
    <scope>TISSUE SPECIFICITY</scope>
    <source>
        <strain>cv. Violet 26</strain>
    </source>
</reference>
<reference key="3">
    <citation type="journal article" date="2012" name="Plant Cell">
        <title>The R2R3-MYB-like regulatory factor EOBI, acting downstream of EOBII, regulates scent production by activating ODO1 and structural scent-related genes in petunia.</title>
        <authorList>
            <person name="Spitzer-Rimon B."/>
            <person name="Farhi M."/>
            <person name="Albo B."/>
            <person name="Cna'ani A."/>
            <person name="Ben Zvi M.M."/>
            <person name="Masci T."/>
            <person name="Edelbaum O."/>
            <person name="Yu Y."/>
            <person name="Shklarman E."/>
            <person name="Ovadis M."/>
            <person name="Vainstein A."/>
        </authorList>
    </citation>
    <scope>INDUCTION BY EOBI</scope>
    <source>
        <strain>cv. W115</strain>
    </source>
</reference>
<reference key="4">
    <citation type="journal article" date="2015" name="Proc. Natl. Acad. Sci. U.S.A.">
        <title>Circadian clock gene LATE ELONGATED HYPOCOTYL directly regulates the timing of floral scent emission in Petunia.</title>
        <authorList>
            <person name="Fenske M.P."/>
            <person name="Hewett Hazelton K.D."/>
            <person name="Hempton A.K."/>
            <person name="Shim J.S."/>
            <person name="Yamamoto B.M."/>
            <person name="Riffell J.A."/>
            <person name="Imaizumi T."/>
        </authorList>
    </citation>
    <scope>INDUCTION</scope>
</reference>
<sequence>MQSLTPSSGVNLKSIIRKTSLPPGQTRFITGRVIKCGYQVDSANTVNTAGAPASYNSGHVGASRADWQSSCAILASKVVSQQPDTEKTGGAGNITAVNGHKTLDLVSIDNLPKALTITDLSPAPMHGSTLRVAYQGVPGAYSEAAAGKAYPNCEAIPCDQFEVAFQAVELWIADRAVLPVENSLGGSIHRNYDLLLRHRLHIVGEVQLPVHHCLLALPGVRKEYLTRVISHPQALAQCELTITKLGLNVAREAVDDTAGAAEYIAANNLRDTAAVASARAAELYGLQILAEGIQDDSSNVTRFVMLAREPIIPRMDRPFKTSIVFAHEGTGVLFKVLSAFAFRNISLTKIESRPHRNRPIRLVDDANVGTAKHFEYMFYVDFDASMADVRAQNALAEVQEFTSFLRVLGSYPMDMTPCCPSRDE</sequence>
<dbReference type="EC" id="4.2.1.91" evidence="4"/>
<dbReference type="EMBL" id="FJ790412">
    <property type="protein sequence ID" value="ACY79502.1"/>
    <property type="molecule type" value="mRNA"/>
</dbReference>
<dbReference type="SMR" id="D3U715"/>
<dbReference type="BRENDA" id="4.2.1.91">
    <property type="organism ID" value="4700"/>
</dbReference>
<dbReference type="UniPathway" id="UPA00121">
    <property type="reaction ID" value="UER00344"/>
</dbReference>
<dbReference type="GO" id="GO:0009507">
    <property type="term" value="C:chloroplast"/>
    <property type="evidence" value="ECO:0000314"/>
    <property type="project" value="UniProtKB"/>
</dbReference>
<dbReference type="GO" id="GO:0009570">
    <property type="term" value="C:chloroplast stroma"/>
    <property type="evidence" value="ECO:0007669"/>
    <property type="project" value="UniProtKB-SubCell"/>
</dbReference>
<dbReference type="GO" id="GO:0047769">
    <property type="term" value="F:arogenate dehydratase activity"/>
    <property type="evidence" value="ECO:0000314"/>
    <property type="project" value="UniProtKB"/>
</dbReference>
<dbReference type="GO" id="GO:0007623">
    <property type="term" value="P:circadian rhythm"/>
    <property type="evidence" value="ECO:0000270"/>
    <property type="project" value="UniProtKB"/>
</dbReference>
<dbReference type="GO" id="GO:0009094">
    <property type="term" value="P:L-phenylalanine biosynthetic process"/>
    <property type="evidence" value="ECO:0007669"/>
    <property type="project" value="UniProtKB-UniPathway"/>
</dbReference>
<dbReference type="CDD" id="cd04905">
    <property type="entry name" value="ACT_CM-PDT"/>
    <property type="match status" value="1"/>
</dbReference>
<dbReference type="CDD" id="cd13631">
    <property type="entry name" value="PBP2_Ct-PDT_like"/>
    <property type="match status" value="1"/>
</dbReference>
<dbReference type="FunFam" id="3.30.70.260:FF:000019">
    <property type="entry name" value="Arogenate dehydratase"/>
    <property type="match status" value="1"/>
</dbReference>
<dbReference type="FunFam" id="3.40.190.10:FF:000028">
    <property type="entry name" value="Arogenate dehydratase"/>
    <property type="match status" value="1"/>
</dbReference>
<dbReference type="FunFam" id="3.40.190.10:FF:000031">
    <property type="entry name" value="Arogenate dehydratase"/>
    <property type="match status" value="1"/>
</dbReference>
<dbReference type="Gene3D" id="3.30.70.260">
    <property type="match status" value="1"/>
</dbReference>
<dbReference type="Gene3D" id="3.40.190.10">
    <property type="entry name" value="Periplasmic binding protein-like II"/>
    <property type="match status" value="2"/>
</dbReference>
<dbReference type="InterPro" id="IPR045865">
    <property type="entry name" value="ACT-like_dom_sf"/>
</dbReference>
<dbReference type="InterPro" id="IPR002912">
    <property type="entry name" value="ACT_dom"/>
</dbReference>
<dbReference type="InterPro" id="IPR001086">
    <property type="entry name" value="Preph_deHydtase"/>
</dbReference>
<dbReference type="InterPro" id="IPR018528">
    <property type="entry name" value="Preph_deHydtase_CS"/>
</dbReference>
<dbReference type="PANTHER" id="PTHR21022">
    <property type="entry name" value="PREPHENATE DEHYDRATASE P PROTEIN"/>
    <property type="match status" value="1"/>
</dbReference>
<dbReference type="PANTHER" id="PTHR21022:SF19">
    <property type="entry name" value="PREPHENATE DEHYDRATASE-RELATED"/>
    <property type="match status" value="1"/>
</dbReference>
<dbReference type="Pfam" id="PF00800">
    <property type="entry name" value="PDT"/>
    <property type="match status" value="1"/>
</dbReference>
<dbReference type="SUPFAM" id="SSF55021">
    <property type="entry name" value="ACT-like"/>
    <property type="match status" value="1"/>
</dbReference>
<dbReference type="SUPFAM" id="SSF53850">
    <property type="entry name" value="Periplasmic binding protein-like II"/>
    <property type="match status" value="1"/>
</dbReference>
<dbReference type="PROSITE" id="PS51671">
    <property type="entry name" value="ACT"/>
    <property type="match status" value="1"/>
</dbReference>
<dbReference type="PROSITE" id="PS00857">
    <property type="entry name" value="PREPHENATE_DEHYDR_1"/>
    <property type="match status" value="1"/>
</dbReference>
<dbReference type="PROSITE" id="PS00858">
    <property type="entry name" value="PREPHENATE_DEHYDR_2"/>
    <property type="match status" value="1"/>
</dbReference>
<dbReference type="PROSITE" id="PS51171">
    <property type="entry name" value="PREPHENATE_DEHYDR_3"/>
    <property type="match status" value="1"/>
</dbReference>
<feature type="transit peptide" description="Chloroplast" evidence="1">
    <location>
        <begin position="1"/>
        <end position="52"/>
    </location>
</feature>
<feature type="chain" id="PRO_0000451502" description="Arogenate dehydratase 1">
    <location>
        <begin position="53"/>
        <end position="424"/>
    </location>
</feature>
<feature type="domain" description="Prephenate dehydratase" evidence="2">
    <location>
        <begin position="131"/>
        <end position="308"/>
    </location>
</feature>
<feature type="domain" description="ACT" evidence="3">
    <location>
        <begin position="321"/>
        <end position="412"/>
    </location>
</feature>
<evidence type="ECO:0000255" key="1"/>
<evidence type="ECO:0000255" key="2">
    <source>
        <dbReference type="PROSITE-ProRule" id="PRU00517"/>
    </source>
</evidence>
<evidence type="ECO:0000255" key="3">
    <source>
        <dbReference type="PROSITE-ProRule" id="PRU01007"/>
    </source>
</evidence>
<evidence type="ECO:0000269" key="4">
    <source>
    </source>
</evidence>
<evidence type="ECO:0000269" key="5">
    <source>
    </source>
</evidence>
<evidence type="ECO:0000269" key="6">
    <source>
    </source>
</evidence>
<evidence type="ECO:0000269" key="7">
    <source>
    </source>
</evidence>
<evidence type="ECO:0000303" key="8">
    <source>
    </source>
</evidence>
<accession>D3U715</accession>
<name>AROD1_PETHY</name>
<proteinExistence type="evidence at protein level"/>